<proteinExistence type="inferred from homology"/>
<protein>
    <recommendedName>
        <fullName evidence="1">Methionine import ATP-binding protein MetN 3</fullName>
        <ecNumber evidence="1">7.4.2.11</ecNumber>
    </recommendedName>
</protein>
<accession>Q815Y7</accession>
<dbReference type="EC" id="7.4.2.11" evidence="1"/>
<dbReference type="EMBL" id="AE016877">
    <property type="protein sequence ID" value="AAP11859.1"/>
    <property type="molecule type" value="Genomic_DNA"/>
</dbReference>
<dbReference type="RefSeq" id="NP_834658.1">
    <property type="nucleotide sequence ID" value="NC_004722.1"/>
</dbReference>
<dbReference type="RefSeq" id="WP_000601775.1">
    <property type="nucleotide sequence ID" value="NC_004722.1"/>
</dbReference>
<dbReference type="SMR" id="Q815Y7"/>
<dbReference type="STRING" id="226900.BC_4987"/>
<dbReference type="KEGG" id="bce:BC4987"/>
<dbReference type="PATRIC" id="fig|226900.8.peg.5137"/>
<dbReference type="HOGENOM" id="CLU_000604_1_3_9"/>
<dbReference type="OrthoDB" id="9802264at2"/>
<dbReference type="Proteomes" id="UP000001417">
    <property type="component" value="Chromosome"/>
</dbReference>
<dbReference type="GO" id="GO:0005886">
    <property type="term" value="C:plasma membrane"/>
    <property type="evidence" value="ECO:0007669"/>
    <property type="project" value="UniProtKB-SubCell"/>
</dbReference>
<dbReference type="GO" id="GO:0033232">
    <property type="term" value="F:ABC-type D-methionine transporter activity"/>
    <property type="evidence" value="ECO:0007669"/>
    <property type="project" value="UniProtKB-EC"/>
</dbReference>
<dbReference type="GO" id="GO:0005524">
    <property type="term" value="F:ATP binding"/>
    <property type="evidence" value="ECO:0007669"/>
    <property type="project" value="UniProtKB-KW"/>
</dbReference>
<dbReference type="GO" id="GO:0016887">
    <property type="term" value="F:ATP hydrolysis activity"/>
    <property type="evidence" value="ECO:0007669"/>
    <property type="project" value="InterPro"/>
</dbReference>
<dbReference type="CDD" id="cd03258">
    <property type="entry name" value="ABC_MetN_methionine_transporter"/>
    <property type="match status" value="1"/>
</dbReference>
<dbReference type="FunFam" id="3.30.70.260:FF:000057">
    <property type="entry name" value="Methionine import ATP-binding protein MetN"/>
    <property type="match status" value="1"/>
</dbReference>
<dbReference type="FunFam" id="3.40.50.300:FF:000233">
    <property type="entry name" value="Methionine import ATP-binding protein MetN"/>
    <property type="match status" value="1"/>
</dbReference>
<dbReference type="Gene3D" id="3.30.70.260">
    <property type="match status" value="1"/>
</dbReference>
<dbReference type="Gene3D" id="3.40.50.300">
    <property type="entry name" value="P-loop containing nucleotide triphosphate hydrolases"/>
    <property type="match status" value="1"/>
</dbReference>
<dbReference type="InterPro" id="IPR003593">
    <property type="entry name" value="AAA+_ATPase"/>
</dbReference>
<dbReference type="InterPro" id="IPR003439">
    <property type="entry name" value="ABC_transporter-like_ATP-bd"/>
</dbReference>
<dbReference type="InterPro" id="IPR017871">
    <property type="entry name" value="ABC_transporter-like_CS"/>
</dbReference>
<dbReference type="InterPro" id="IPR045865">
    <property type="entry name" value="ACT-like_dom_sf"/>
</dbReference>
<dbReference type="InterPro" id="IPR041701">
    <property type="entry name" value="MetN_ABC"/>
</dbReference>
<dbReference type="InterPro" id="IPR050086">
    <property type="entry name" value="MetN_ABC_transporter-like"/>
</dbReference>
<dbReference type="InterPro" id="IPR018449">
    <property type="entry name" value="NIL_domain"/>
</dbReference>
<dbReference type="InterPro" id="IPR027417">
    <property type="entry name" value="P-loop_NTPase"/>
</dbReference>
<dbReference type="PANTHER" id="PTHR43166">
    <property type="entry name" value="AMINO ACID IMPORT ATP-BINDING PROTEIN"/>
    <property type="match status" value="1"/>
</dbReference>
<dbReference type="PANTHER" id="PTHR43166:SF36">
    <property type="entry name" value="METHIONINE IMPORT ATP-BINDING PROTEIN METN 2"/>
    <property type="match status" value="1"/>
</dbReference>
<dbReference type="Pfam" id="PF00005">
    <property type="entry name" value="ABC_tran"/>
    <property type="match status" value="1"/>
</dbReference>
<dbReference type="Pfam" id="PF09383">
    <property type="entry name" value="NIL"/>
    <property type="match status" value="1"/>
</dbReference>
<dbReference type="SMART" id="SM00382">
    <property type="entry name" value="AAA"/>
    <property type="match status" value="1"/>
</dbReference>
<dbReference type="SMART" id="SM00930">
    <property type="entry name" value="NIL"/>
    <property type="match status" value="1"/>
</dbReference>
<dbReference type="SUPFAM" id="SSF55021">
    <property type="entry name" value="ACT-like"/>
    <property type="match status" value="1"/>
</dbReference>
<dbReference type="SUPFAM" id="SSF52540">
    <property type="entry name" value="P-loop containing nucleoside triphosphate hydrolases"/>
    <property type="match status" value="1"/>
</dbReference>
<dbReference type="PROSITE" id="PS00211">
    <property type="entry name" value="ABC_TRANSPORTER_1"/>
    <property type="match status" value="1"/>
</dbReference>
<dbReference type="PROSITE" id="PS50893">
    <property type="entry name" value="ABC_TRANSPORTER_2"/>
    <property type="match status" value="1"/>
</dbReference>
<dbReference type="PROSITE" id="PS51264">
    <property type="entry name" value="METN"/>
    <property type="match status" value="1"/>
</dbReference>
<gene>
    <name evidence="1" type="primary">metN3</name>
    <name type="ordered locus">BC_4987</name>
</gene>
<feature type="chain" id="PRO_0000270237" description="Methionine import ATP-binding protein MetN 3">
    <location>
        <begin position="1"/>
        <end position="341"/>
    </location>
</feature>
<feature type="domain" description="ABC transporter" evidence="1">
    <location>
        <begin position="2"/>
        <end position="241"/>
    </location>
</feature>
<feature type="binding site" evidence="1">
    <location>
        <begin position="38"/>
        <end position="45"/>
    </location>
    <ligand>
        <name>ATP</name>
        <dbReference type="ChEBI" id="CHEBI:30616"/>
    </ligand>
</feature>
<comment type="function">
    <text evidence="1">Part of the ABC transporter complex MetNIQ involved in methionine import. Responsible for energy coupling to the transport system.</text>
</comment>
<comment type="catalytic activity">
    <reaction evidence="1">
        <text>L-methionine(out) + ATP + H2O = L-methionine(in) + ADP + phosphate + H(+)</text>
        <dbReference type="Rhea" id="RHEA:29779"/>
        <dbReference type="ChEBI" id="CHEBI:15377"/>
        <dbReference type="ChEBI" id="CHEBI:15378"/>
        <dbReference type="ChEBI" id="CHEBI:30616"/>
        <dbReference type="ChEBI" id="CHEBI:43474"/>
        <dbReference type="ChEBI" id="CHEBI:57844"/>
        <dbReference type="ChEBI" id="CHEBI:456216"/>
        <dbReference type="EC" id="7.4.2.11"/>
    </reaction>
</comment>
<comment type="catalytic activity">
    <reaction evidence="1">
        <text>D-methionine(out) + ATP + H2O = D-methionine(in) + ADP + phosphate + H(+)</text>
        <dbReference type="Rhea" id="RHEA:29767"/>
        <dbReference type="ChEBI" id="CHEBI:15377"/>
        <dbReference type="ChEBI" id="CHEBI:15378"/>
        <dbReference type="ChEBI" id="CHEBI:30616"/>
        <dbReference type="ChEBI" id="CHEBI:43474"/>
        <dbReference type="ChEBI" id="CHEBI:57932"/>
        <dbReference type="ChEBI" id="CHEBI:456216"/>
        <dbReference type="EC" id="7.4.2.11"/>
    </reaction>
</comment>
<comment type="subunit">
    <text evidence="1">The complex is composed of two ATP-binding proteins (MetN), two transmembrane proteins (MetI) and a solute-binding protein (MetQ).</text>
</comment>
<comment type="subcellular location">
    <subcellularLocation>
        <location evidence="1">Cell membrane</location>
        <topology evidence="1">Peripheral membrane protein</topology>
    </subcellularLocation>
</comment>
<comment type="similarity">
    <text evidence="1">Belongs to the ABC transporter superfamily. Methionine importer (TC 3.A.1.24) family.</text>
</comment>
<keyword id="KW-0029">Amino-acid transport</keyword>
<keyword id="KW-0067">ATP-binding</keyword>
<keyword id="KW-1003">Cell membrane</keyword>
<keyword id="KW-0472">Membrane</keyword>
<keyword id="KW-0547">Nucleotide-binding</keyword>
<keyword id="KW-1185">Reference proteome</keyword>
<keyword id="KW-1278">Translocase</keyword>
<keyword id="KW-0813">Transport</keyword>
<evidence type="ECO:0000255" key="1">
    <source>
        <dbReference type="HAMAP-Rule" id="MF_01719"/>
    </source>
</evidence>
<name>METN3_BACCR</name>
<sequence>MILLENVKKIYKAKSGDVTAVDNANLKIEKGEIFGVIGYSGAGKSSLIRLFNQLEKPTSGQITIANRVISAITGSELRKARQEIGMIFQHFNLLWSRTVRENIEFPLEIAGVDKAKRRKRVDELIHLVGLEGRGDAYPSQLSGGQKQRVGIARALANNPQVLLCDEATSALDPETTDQILDLLLDINKRLGLTIVLITHEMHVIRKICNRVAVMEKGKIVETGPVLDVFRNPKQDITKRFVQQLTDSEDTNETIESLIEKYPDGKVIRLQFIGEAVERPVLQRLMQRSDIEVSILQGNIAQTNNGSYGSLVVHLNGEETAIQQAIEGIHQDQVELEVIAHG</sequence>
<reference key="1">
    <citation type="journal article" date="2003" name="Nature">
        <title>Genome sequence of Bacillus cereus and comparative analysis with Bacillus anthracis.</title>
        <authorList>
            <person name="Ivanova N."/>
            <person name="Sorokin A."/>
            <person name="Anderson I."/>
            <person name="Galleron N."/>
            <person name="Candelon B."/>
            <person name="Kapatral V."/>
            <person name="Bhattacharyya A."/>
            <person name="Reznik G."/>
            <person name="Mikhailova N."/>
            <person name="Lapidus A."/>
            <person name="Chu L."/>
            <person name="Mazur M."/>
            <person name="Goltsman E."/>
            <person name="Larsen N."/>
            <person name="D'Souza M."/>
            <person name="Walunas T."/>
            <person name="Grechkin Y."/>
            <person name="Pusch G."/>
            <person name="Haselkorn R."/>
            <person name="Fonstein M."/>
            <person name="Ehrlich S.D."/>
            <person name="Overbeek R."/>
            <person name="Kyrpides N.C."/>
        </authorList>
    </citation>
    <scope>NUCLEOTIDE SEQUENCE [LARGE SCALE GENOMIC DNA]</scope>
    <source>
        <strain>ATCC 14579 / DSM 31 / CCUG 7414 / JCM 2152 / NBRC 15305 / NCIMB 9373 / NCTC 2599 / NRRL B-3711</strain>
    </source>
</reference>
<organism>
    <name type="scientific">Bacillus cereus (strain ATCC 14579 / DSM 31 / CCUG 7414 / JCM 2152 / NBRC 15305 / NCIMB 9373 / NCTC 2599 / NRRL B-3711)</name>
    <dbReference type="NCBI Taxonomy" id="226900"/>
    <lineage>
        <taxon>Bacteria</taxon>
        <taxon>Bacillati</taxon>
        <taxon>Bacillota</taxon>
        <taxon>Bacilli</taxon>
        <taxon>Bacillales</taxon>
        <taxon>Bacillaceae</taxon>
        <taxon>Bacillus</taxon>
        <taxon>Bacillus cereus group</taxon>
    </lineage>
</organism>